<comment type="function">
    <text evidence="1">Regulator of the exon junction complex (EJC), a multiprotein complex that associates immediately upstream of the exon-exon junction on mRNAs and serves as a positional landmarks for the intron exon structure of genes and directs post-transcriptional processes in the cytoplasm such as mRNA export, nonsense-mediated mRNA decay (NMD) or translation.</text>
</comment>
<comment type="subunit">
    <text evidence="1">Interacts (via N-terminus) with mago and tsu/Y14; the interaction is direct.</text>
</comment>
<comment type="subcellular location">
    <subcellularLocation>
        <location evidence="1">Cytoplasm</location>
    </subcellularLocation>
    <subcellularLocation>
        <location evidence="1">Nucleus</location>
    </subcellularLocation>
    <text evidence="1">Shuttles between the nucleus and the cytoplasm. Nuclear export is mediated by emb/Crm1 (By similarity).</text>
</comment>
<comment type="similarity">
    <text evidence="5">Belongs to the pym family.</text>
</comment>
<comment type="sequence caution" evidence="5">
    <conflict type="erroneous gene model prediction">
        <sequence resource="EMBL-CDS" id="EDX15624"/>
    </conflict>
</comment>
<reference key="1">
    <citation type="journal article" date="2007" name="Nature">
        <title>Evolution of genes and genomes on the Drosophila phylogeny.</title>
        <authorList>
            <consortium name="Drosophila 12 genomes consortium"/>
        </authorList>
    </citation>
    <scope>NUCLEOTIDE SEQUENCE [LARGE SCALE GENOMIC DNA]</scope>
</reference>
<name>PYM_DROSI</name>
<proteinExistence type="inferred from homology"/>
<gene>
    <name evidence="2" type="primary">Pym</name>
    <name type="synonym">wibg</name>
    <name type="ORF">GD15199</name>
</gene>
<accession>B4NSP6</accession>
<feature type="chain" id="PRO_0000378163" description="Partner of Y14 and mago">
    <location>
        <begin position="1"/>
        <end position="204"/>
    </location>
</feature>
<feature type="region of interest" description="Disordered" evidence="4">
    <location>
        <begin position="1"/>
        <end position="27"/>
    </location>
</feature>
<feature type="region of interest" description="Disordered" evidence="4">
    <location>
        <begin position="52"/>
        <end position="142"/>
    </location>
</feature>
<feature type="coiled-coil region" evidence="3">
    <location>
        <begin position="149"/>
        <end position="181"/>
    </location>
</feature>
<feature type="compositionally biased region" description="Basic and acidic residues" evidence="4">
    <location>
        <begin position="68"/>
        <end position="90"/>
    </location>
</feature>
<feature type="compositionally biased region" description="Polar residues" evidence="4">
    <location>
        <begin position="120"/>
        <end position="130"/>
    </location>
</feature>
<sequence>MSTYLQSSEGKFIPATKRPDGTWRKARRVKDGYVPQEEVPLYESKGKQFVAQRQAGVPPGMCPLVAAESKKEREKQERTRAKKQEKESGRQPKAPAPGVLVMPPSTCPPPKVSQQQQQQPSGSRDINSISKAMEDTLKLDAPQEVVDPAKQLKKLRKKIREIEQIESRIQAGEQKKLDKDQLDKVKKKSEILRQIKDLESTPRS</sequence>
<evidence type="ECO:0000250" key="1"/>
<evidence type="ECO:0000250" key="2">
    <source>
        <dbReference type="UniProtKB" id="P82804"/>
    </source>
</evidence>
<evidence type="ECO:0000255" key="3"/>
<evidence type="ECO:0000256" key="4">
    <source>
        <dbReference type="SAM" id="MobiDB-lite"/>
    </source>
</evidence>
<evidence type="ECO:0000305" key="5"/>
<protein>
    <recommendedName>
        <fullName evidence="2">Partner of Y14 and mago</fullName>
    </recommendedName>
    <alternativeName>
        <fullName>Protein within the bgcn gene intron</fullName>
    </alternativeName>
</protein>
<keyword id="KW-0175">Coiled coil</keyword>
<keyword id="KW-0963">Cytoplasm</keyword>
<keyword id="KW-0539">Nucleus</keyword>
<keyword id="KW-1185">Reference proteome</keyword>
<dbReference type="EMBL" id="CH982397">
    <property type="protein sequence ID" value="EDX15624.1"/>
    <property type="status" value="ALT_SEQ"/>
    <property type="molecule type" value="Genomic_DNA"/>
</dbReference>
<dbReference type="SMR" id="B4NSP6"/>
<dbReference type="STRING" id="7240.B4NSP6"/>
<dbReference type="EnsemblMetazoa" id="FBtr0349436">
    <property type="protein sequence ID" value="FBpp0314276"/>
    <property type="gene ID" value="FBgn0268649"/>
</dbReference>
<dbReference type="EnsemblMetazoa" id="XM_016182939.3">
    <property type="protein sequence ID" value="XP_016029302.1"/>
    <property type="gene ID" value="LOC27207209"/>
</dbReference>
<dbReference type="OrthoDB" id="21625at2759"/>
<dbReference type="Proteomes" id="UP000000304">
    <property type="component" value="Unassembled WGS sequence"/>
</dbReference>
<dbReference type="Bgee" id="FBgn0268649">
    <property type="expression patterns" value="Expressed in female reproductive system and 3 other cell types or tissues"/>
</dbReference>
<dbReference type="GO" id="GO:0005737">
    <property type="term" value="C:cytoplasm"/>
    <property type="evidence" value="ECO:0007669"/>
    <property type="project" value="UniProtKB-SubCell"/>
</dbReference>
<dbReference type="GO" id="GO:0035145">
    <property type="term" value="C:exon-exon junction complex"/>
    <property type="evidence" value="ECO:0000250"/>
    <property type="project" value="UniProtKB"/>
</dbReference>
<dbReference type="GO" id="GO:1990448">
    <property type="term" value="F:exon-exon junction complex binding"/>
    <property type="evidence" value="ECO:0007669"/>
    <property type="project" value="EnsemblMetazoa"/>
</dbReference>
<dbReference type="GO" id="GO:0003723">
    <property type="term" value="F:RNA binding"/>
    <property type="evidence" value="ECO:0007669"/>
    <property type="project" value="EnsemblMetazoa"/>
</dbReference>
<dbReference type="GO" id="GO:1903259">
    <property type="term" value="P:exon-exon junction complex disassembly"/>
    <property type="evidence" value="ECO:0007669"/>
    <property type="project" value="EnsemblMetazoa"/>
</dbReference>
<dbReference type="GO" id="GO:0000184">
    <property type="term" value="P:nuclear-transcribed mRNA catabolic process, nonsense-mediated decay"/>
    <property type="evidence" value="ECO:0000250"/>
    <property type="project" value="UniProtKB"/>
</dbReference>
<dbReference type="InterPro" id="IPR039333">
    <property type="entry name" value="PYM1"/>
</dbReference>
<dbReference type="InterPro" id="IPR015362">
    <property type="entry name" value="WIBG_mago-bd"/>
</dbReference>
<dbReference type="InterPro" id="IPR036348">
    <property type="entry name" value="WIBG_N_sf"/>
</dbReference>
<dbReference type="PANTHER" id="PTHR22959:SF0">
    <property type="entry name" value="PARTNER OF Y14 AND MAGO"/>
    <property type="match status" value="1"/>
</dbReference>
<dbReference type="PANTHER" id="PTHR22959">
    <property type="entry name" value="PYM PROTEIN"/>
    <property type="match status" value="1"/>
</dbReference>
<dbReference type="Pfam" id="PF09282">
    <property type="entry name" value="Mago-bind"/>
    <property type="match status" value="1"/>
</dbReference>
<dbReference type="SMART" id="SM01273">
    <property type="entry name" value="Mago-bind"/>
    <property type="match status" value="1"/>
</dbReference>
<dbReference type="SUPFAM" id="SSF101931">
    <property type="entry name" value="Pym (Within the bgcn gene intron protein, WIBG), N-terminal domain"/>
    <property type="match status" value="1"/>
</dbReference>
<organism>
    <name type="scientific">Drosophila simulans</name>
    <name type="common">Fruit fly</name>
    <dbReference type="NCBI Taxonomy" id="7240"/>
    <lineage>
        <taxon>Eukaryota</taxon>
        <taxon>Metazoa</taxon>
        <taxon>Ecdysozoa</taxon>
        <taxon>Arthropoda</taxon>
        <taxon>Hexapoda</taxon>
        <taxon>Insecta</taxon>
        <taxon>Pterygota</taxon>
        <taxon>Neoptera</taxon>
        <taxon>Endopterygota</taxon>
        <taxon>Diptera</taxon>
        <taxon>Brachycera</taxon>
        <taxon>Muscomorpha</taxon>
        <taxon>Ephydroidea</taxon>
        <taxon>Drosophilidae</taxon>
        <taxon>Drosophila</taxon>
        <taxon>Sophophora</taxon>
    </lineage>
</organism>